<gene>
    <name evidence="1" type="primary">truB</name>
    <name type="ordered locus">LCA_1242</name>
</gene>
<protein>
    <recommendedName>
        <fullName evidence="1">tRNA pseudouridine synthase B</fullName>
        <ecNumber evidence="1">5.4.99.25</ecNumber>
    </recommendedName>
    <alternativeName>
        <fullName evidence="1">tRNA pseudouridine(55) synthase</fullName>
        <shortName evidence="1">Psi55 synthase</shortName>
    </alternativeName>
    <alternativeName>
        <fullName evidence="1">tRNA pseudouridylate synthase</fullName>
    </alternativeName>
    <alternativeName>
        <fullName evidence="1">tRNA-uridine isomerase</fullName>
    </alternativeName>
</protein>
<dbReference type="EC" id="5.4.99.25" evidence="1"/>
<dbReference type="EMBL" id="CR936503">
    <property type="protein sequence ID" value="CAI55546.1"/>
    <property type="molecule type" value="Genomic_DNA"/>
</dbReference>
<dbReference type="RefSeq" id="WP_011374939.1">
    <property type="nucleotide sequence ID" value="NC_007576.1"/>
</dbReference>
<dbReference type="SMR" id="Q38W87"/>
<dbReference type="STRING" id="314315.LCA_1242"/>
<dbReference type="KEGG" id="lsa:LCA_1242"/>
<dbReference type="eggNOG" id="COG0130">
    <property type="taxonomic scope" value="Bacteria"/>
</dbReference>
<dbReference type="HOGENOM" id="CLU_032087_0_1_9"/>
<dbReference type="OrthoDB" id="9802309at2"/>
<dbReference type="Proteomes" id="UP000002707">
    <property type="component" value="Chromosome"/>
</dbReference>
<dbReference type="GO" id="GO:0003723">
    <property type="term" value="F:RNA binding"/>
    <property type="evidence" value="ECO:0007669"/>
    <property type="project" value="InterPro"/>
</dbReference>
<dbReference type="GO" id="GO:0160148">
    <property type="term" value="F:tRNA pseudouridine(55) synthase activity"/>
    <property type="evidence" value="ECO:0007669"/>
    <property type="project" value="UniProtKB-EC"/>
</dbReference>
<dbReference type="GO" id="GO:1990481">
    <property type="term" value="P:mRNA pseudouridine synthesis"/>
    <property type="evidence" value="ECO:0007669"/>
    <property type="project" value="TreeGrafter"/>
</dbReference>
<dbReference type="GO" id="GO:0031119">
    <property type="term" value="P:tRNA pseudouridine synthesis"/>
    <property type="evidence" value="ECO:0007669"/>
    <property type="project" value="UniProtKB-UniRule"/>
</dbReference>
<dbReference type="CDD" id="cd02573">
    <property type="entry name" value="PseudoU_synth_EcTruB"/>
    <property type="match status" value="1"/>
</dbReference>
<dbReference type="FunFam" id="3.30.2350.10:FF:000011">
    <property type="entry name" value="tRNA pseudouridine synthase B"/>
    <property type="match status" value="1"/>
</dbReference>
<dbReference type="Gene3D" id="3.30.2350.10">
    <property type="entry name" value="Pseudouridine synthase"/>
    <property type="match status" value="1"/>
</dbReference>
<dbReference type="HAMAP" id="MF_01080">
    <property type="entry name" value="TruB_bact"/>
    <property type="match status" value="1"/>
</dbReference>
<dbReference type="InterPro" id="IPR020103">
    <property type="entry name" value="PsdUridine_synth_cat_dom_sf"/>
</dbReference>
<dbReference type="InterPro" id="IPR002501">
    <property type="entry name" value="PsdUridine_synth_N"/>
</dbReference>
<dbReference type="InterPro" id="IPR014780">
    <property type="entry name" value="tRNA_psdUridine_synth_TruB"/>
</dbReference>
<dbReference type="InterPro" id="IPR032819">
    <property type="entry name" value="TruB_C"/>
</dbReference>
<dbReference type="NCBIfam" id="TIGR00431">
    <property type="entry name" value="TruB"/>
    <property type="match status" value="1"/>
</dbReference>
<dbReference type="PANTHER" id="PTHR13767:SF2">
    <property type="entry name" value="PSEUDOURIDYLATE SYNTHASE TRUB1"/>
    <property type="match status" value="1"/>
</dbReference>
<dbReference type="PANTHER" id="PTHR13767">
    <property type="entry name" value="TRNA-PSEUDOURIDINE SYNTHASE"/>
    <property type="match status" value="1"/>
</dbReference>
<dbReference type="Pfam" id="PF16198">
    <property type="entry name" value="TruB_C_2"/>
    <property type="match status" value="1"/>
</dbReference>
<dbReference type="Pfam" id="PF01509">
    <property type="entry name" value="TruB_N"/>
    <property type="match status" value="1"/>
</dbReference>
<dbReference type="SUPFAM" id="SSF55120">
    <property type="entry name" value="Pseudouridine synthase"/>
    <property type="match status" value="1"/>
</dbReference>
<keyword id="KW-0413">Isomerase</keyword>
<keyword id="KW-1185">Reference proteome</keyword>
<keyword id="KW-0819">tRNA processing</keyword>
<name>TRUB_LATSS</name>
<evidence type="ECO:0000255" key="1">
    <source>
        <dbReference type="HAMAP-Rule" id="MF_01080"/>
    </source>
</evidence>
<sequence>MDGIIPLYKERGMTSNDCVFKVRRILHMKKVGHSGTLDPNVDGVLPICIGQATKVVDQLVHSGKVYTGEITLGLSTTTEDLDGEVVEEQQLTEPISTEKIKETLASFLGESIQIPPMFSAVKVNGRRLYDYARAGDPVERPQRKITITQFDLQGEPEFDAKTGRQTFRFIAGCSKGTYIRTLAVDFGRKLGLPAVMSDLTRLKSGGIQIGSCVTLAQLAEAADNGQLADILIPLDHVFEENVKIALDDDQWAKILNGVFLTFPEQTEEILALTYEGHIKALYQVANAKQHLYRPYKMYLQNQGTH</sequence>
<reference key="1">
    <citation type="journal article" date="2005" name="Nat. Biotechnol.">
        <title>The complete genome sequence of the meat-borne lactic acid bacterium Lactobacillus sakei 23K.</title>
        <authorList>
            <person name="Chaillou S."/>
            <person name="Champomier-Verges M.-C."/>
            <person name="Cornet M."/>
            <person name="Crutz-Le Coq A.-M."/>
            <person name="Dudez A.-M."/>
            <person name="Martin V."/>
            <person name="Beaufils S."/>
            <person name="Darbon-Rongere E."/>
            <person name="Bossy R."/>
            <person name="Loux V."/>
            <person name="Zagorec M."/>
        </authorList>
    </citation>
    <scope>NUCLEOTIDE SEQUENCE [LARGE SCALE GENOMIC DNA]</scope>
    <source>
        <strain>23K</strain>
    </source>
</reference>
<organism>
    <name type="scientific">Latilactobacillus sakei subsp. sakei (strain 23K)</name>
    <name type="common">Lactobacillus sakei subsp. sakei</name>
    <dbReference type="NCBI Taxonomy" id="314315"/>
    <lineage>
        <taxon>Bacteria</taxon>
        <taxon>Bacillati</taxon>
        <taxon>Bacillota</taxon>
        <taxon>Bacilli</taxon>
        <taxon>Lactobacillales</taxon>
        <taxon>Lactobacillaceae</taxon>
        <taxon>Latilactobacillus</taxon>
    </lineage>
</organism>
<comment type="function">
    <text evidence="1">Responsible for synthesis of pseudouridine from uracil-55 in the psi GC loop of transfer RNAs.</text>
</comment>
<comment type="catalytic activity">
    <reaction evidence="1">
        <text>uridine(55) in tRNA = pseudouridine(55) in tRNA</text>
        <dbReference type="Rhea" id="RHEA:42532"/>
        <dbReference type="Rhea" id="RHEA-COMP:10101"/>
        <dbReference type="Rhea" id="RHEA-COMP:10102"/>
        <dbReference type="ChEBI" id="CHEBI:65314"/>
        <dbReference type="ChEBI" id="CHEBI:65315"/>
        <dbReference type="EC" id="5.4.99.25"/>
    </reaction>
</comment>
<comment type="similarity">
    <text evidence="1">Belongs to the pseudouridine synthase TruB family. Type 1 subfamily.</text>
</comment>
<feature type="chain" id="PRO_0000229360" description="tRNA pseudouridine synthase B">
    <location>
        <begin position="1"/>
        <end position="305"/>
    </location>
</feature>
<feature type="active site" description="Nucleophile" evidence="1">
    <location>
        <position position="38"/>
    </location>
</feature>
<accession>Q38W87</accession>
<proteinExistence type="inferred from homology"/>